<dbReference type="EC" id="3.6.1.66" evidence="1"/>
<dbReference type="EMBL" id="CP000612">
    <property type="protein sequence ID" value="ABO51189.1"/>
    <property type="molecule type" value="Genomic_DNA"/>
</dbReference>
<dbReference type="RefSeq" id="WP_011878986.1">
    <property type="nucleotide sequence ID" value="NC_009253.1"/>
</dbReference>
<dbReference type="SMR" id="A4J7Y6"/>
<dbReference type="STRING" id="349161.Dred_2683"/>
<dbReference type="KEGG" id="drm:Dred_2683"/>
<dbReference type="eggNOG" id="COG0127">
    <property type="taxonomic scope" value="Bacteria"/>
</dbReference>
<dbReference type="HOGENOM" id="CLU_082080_0_2_9"/>
<dbReference type="OrthoDB" id="9807456at2"/>
<dbReference type="Proteomes" id="UP000001556">
    <property type="component" value="Chromosome"/>
</dbReference>
<dbReference type="GO" id="GO:0005829">
    <property type="term" value="C:cytosol"/>
    <property type="evidence" value="ECO:0007669"/>
    <property type="project" value="TreeGrafter"/>
</dbReference>
<dbReference type="GO" id="GO:0035870">
    <property type="term" value="F:dITP diphosphatase activity"/>
    <property type="evidence" value="ECO:0007669"/>
    <property type="project" value="RHEA"/>
</dbReference>
<dbReference type="GO" id="GO:0036220">
    <property type="term" value="F:ITP diphosphatase activity"/>
    <property type="evidence" value="ECO:0007669"/>
    <property type="project" value="UniProtKB-EC"/>
</dbReference>
<dbReference type="GO" id="GO:0046872">
    <property type="term" value="F:metal ion binding"/>
    <property type="evidence" value="ECO:0007669"/>
    <property type="project" value="UniProtKB-KW"/>
</dbReference>
<dbReference type="GO" id="GO:0000166">
    <property type="term" value="F:nucleotide binding"/>
    <property type="evidence" value="ECO:0007669"/>
    <property type="project" value="UniProtKB-KW"/>
</dbReference>
<dbReference type="GO" id="GO:0017111">
    <property type="term" value="F:ribonucleoside triphosphate phosphatase activity"/>
    <property type="evidence" value="ECO:0007669"/>
    <property type="project" value="InterPro"/>
</dbReference>
<dbReference type="GO" id="GO:0036222">
    <property type="term" value="F:XTP diphosphatase activity"/>
    <property type="evidence" value="ECO:0007669"/>
    <property type="project" value="RHEA"/>
</dbReference>
<dbReference type="GO" id="GO:0009117">
    <property type="term" value="P:nucleotide metabolic process"/>
    <property type="evidence" value="ECO:0007669"/>
    <property type="project" value="UniProtKB-KW"/>
</dbReference>
<dbReference type="GO" id="GO:0009146">
    <property type="term" value="P:purine nucleoside triphosphate catabolic process"/>
    <property type="evidence" value="ECO:0007669"/>
    <property type="project" value="UniProtKB-UniRule"/>
</dbReference>
<dbReference type="CDD" id="cd00515">
    <property type="entry name" value="HAM1"/>
    <property type="match status" value="1"/>
</dbReference>
<dbReference type="FunFam" id="3.90.950.10:FF:000001">
    <property type="entry name" value="dITP/XTP pyrophosphatase"/>
    <property type="match status" value="1"/>
</dbReference>
<dbReference type="Gene3D" id="3.90.950.10">
    <property type="match status" value="1"/>
</dbReference>
<dbReference type="HAMAP" id="MF_01405">
    <property type="entry name" value="Non_canon_purine_NTPase"/>
    <property type="match status" value="1"/>
</dbReference>
<dbReference type="InterPro" id="IPR020922">
    <property type="entry name" value="dITP/XTP_pyrophosphatase"/>
</dbReference>
<dbReference type="InterPro" id="IPR029001">
    <property type="entry name" value="ITPase-like_fam"/>
</dbReference>
<dbReference type="InterPro" id="IPR002637">
    <property type="entry name" value="RdgB/HAM1"/>
</dbReference>
<dbReference type="NCBIfam" id="NF011397">
    <property type="entry name" value="PRK14822.1"/>
    <property type="match status" value="1"/>
</dbReference>
<dbReference type="NCBIfam" id="TIGR00042">
    <property type="entry name" value="RdgB/HAM1 family non-canonical purine NTP pyrophosphatase"/>
    <property type="match status" value="1"/>
</dbReference>
<dbReference type="PANTHER" id="PTHR11067:SF9">
    <property type="entry name" value="INOSINE TRIPHOSPHATE PYROPHOSPHATASE"/>
    <property type="match status" value="1"/>
</dbReference>
<dbReference type="PANTHER" id="PTHR11067">
    <property type="entry name" value="INOSINE TRIPHOSPHATE PYROPHOSPHATASE/HAM1 PROTEIN"/>
    <property type="match status" value="1"/>
</dbReference>
<dbReference type="Pfam" id="PF01725">
    <property type="entry name" value="Ham1p_like"/>
    <property type="match status" value="1"/>
</dbReference>
<dbReference type="SUPFAM" id="SSF52972">
    <property type="entry name" value="ITPase-like"/>
    <property type="match status" value="1"/>
</dbReference>
<organism>
    <name type="scientific">Desulforamulus reducens (strain ATCC BAA-1160 / DSM 100696 / MI-1)</name>
    <name type="common">Desulfotomaculum reducens</name>
    <dbReference type="NCBI Taxonomy" id="349161"/>
    <lineage>
        <taxon>Bacteria</taxon>
        <taxon>Bacillati</taxon>
        <taxon>Bacillota</taxon>
        <taxon>Clostridia</taxon>
        <taxon>Eubacteriales</taxon>
        <taxon>Peptococcaceae</taxon>
        <taxon>Desulforamulus</taxon>
    </lineage>
</organism>
<keyword id="KW-0378">Hydrolase</keyword>
<keyword id="KW-0460">Magnesium</keyword>
<keyword id="KW-0479">Metal-binding</keyword>
<keyword id="KW-0546">Nucleotide metabolism</keyword>
<keyword id="KW-0547">Nucleotide-binding</keyword>
<keyword id="KW-1185">Reference proteome</keyword>
<name>IXTPA_DESRM</name>
<reference key="1">
    <citation type="submission" date="2007-03" db="EMBL/GenBank/DDBJ databases">
        <title>Complete sequence of Desulfotomaculum reducens MI-1.</title>
        <authorList>
            <consortium name="US DOE Joint Genome Institute"/>
            <person name="Copeland A."/>
            <person name="Lucas S."/>
            <person name="Lapidus A."/>
            <person name="Barry K."/>
            <person name="Detter J.C."/>
            <person name="Glavina del Rio T."/>
            <person name="Hammon N."/>
            <person name="Israni S."/>
            <person name="Dalin E."/>
            <person name="Tice H."/>
            <person name="Pitluck S."/>
            <person name="Sims D."/>
            <person name="Brettin T."/>
            <person name="Bruce D."/>
            <person name="Han C."/>
            <person name="Tapia R."/>
            <person name="Schmutz J."/>
            <person name="Larimer F."/>
            <person name="Land M."/>
            <person name="Hauser L."/>
            <person name="Kyrpides N."/>
            <person name="Kim E."/>
            <person name="Tebo B.M."/>
            <person name="Richardson P."/>
        </authorList>
    </citation>
    <scope>NUCLEOTIDE SEQUENCE [LARGE SCALE GENOMIC DNA]</scope>
    <source>
        <strain>ATCC BAA-1160 / DSM 100696 / MI-1</strain>
    </source>
</reference>
<comment type="function">
    <text evidence="1">Pyrophosphatase that catalyzes the hydrolysis of nucleoside triphosphates to their monophosphate derivatives, with a high preference for the non-canonical purine nucleotides XTP (xanthosine triphosphate), dITP (deoxyinosine triphosphate) and ITP. Seems to function as a house-cleaning enzyme that removes non-canonical purine nucleotides from the nucleotide pool, thus preventing their incorporation into DNA/RNA and avoiding chromosomal lesions.</text>
</comment>
<comment type="catalytic activity">
    <reaction evidence="1">
        <text>XTP + H2O = XMP + diphosphate + H(+)</text>
        <dbReference type="Rhea" id="RHEA:28610"/>
        <dbReference type="ChEBI" id="CHEBI:15377"/>
        <dbReference type="ChEBI" id="CHEBI:15378"/>
        <dbReference type="ChEBI" id="CHEBI:33019"/>
        <dbReference type="ChEBI" id="CHEBI:57464"/>
        <dbReference type="ChEBI" id="CHEBI:61314"/>
        <dbReference type="EC" id="3.6.1.66"/>
    </reaction>
</comment>
<comment type="catalytic activity">
    <reaction evidence="1">
        <text>dITP + H2O = dIMP + diphosphate + H(+)</text>
        <dbReference type="Rhea" id="RHEA:28342"/>
        <dbReference type="ChEBI" id="CHEBI:15377"/>
        <dbReference type="ChEBI" id="CHEBI:15378"/>
        <dbReference type="ChEBI" id="CHEBI:33019"/>
        <dbReference type="ChEBI" id="CHEBI:61194"/>
        <dbReference type="ChEBI" id="CHEBI:61382"/>
        <dbReference type="EC" id="3.6.1.66"/>
    </reaction>
</comment>
<comment type="catalytic activity">
    <reaction evidence="1">
        <text>ITP + H2O = IMP + diphosphate + H(+)</text>
        <dbReference type="Rhea" id="RHEA:29399"/>
        <dbReference type="ChEBI" id="CHEBI:15377"/>
        <dbReference type="ChEBI" id="CHEBI:15378"/>
        <dbReference type="ChEBI" id="CHEBI:33019"/>
        <dbReference type="ChEBI" id="CHEBI:58053"/>
        <dbReference type="ChEBI" id="CHEBI:61402"/>
        <dbReference type="EC" id="3.6.1.66"/>
    </reaction>
</comment>
<comment type="cofactor">
    <cofactor evidence="1">
        <name>Mg(2+)</name>
        <dbReference type="ChEBI" id="CHEBI:18420"/>
    </cofactor>
    <text evidence="1">Binds 1 Mg(2+) ion per subunit.</text>
</comment>
<comment type="subunit">
    <text evidence="1">Homodimer.</text>
</comment>
<comment type="similarity">
    <text evidence="1">Belongs to the HAM1 NTPase family.</text>
</comment>
<proteinExistence type="inferred from homology"/>
<sequence>MKLVLATNNKGKVKELAELLKPCGYQVVSIGEFPGFTEVEEDGNTFADNAIKKALAAAEFTGELALADDSGLEVDALKGAPGVYSARFAGEPKDDTANNAKLLSLLEGVPQDHRTARFRCVIAIAEPNGRIHTAEGSCEGVILRELKGEGGFGYDPLFYVPEYKQTFAELDMEKKNSISHRGKALKKAMEILNRLYIHQEV</sequence>
<accession>A4J7Y6</accession>
<protein>
    <recommendedName>
        <fullName evidence="1">dITP/XTP pyrophosphatase</fullName>
        <ecNumber evidence="1">3.6.1.66</ecNumber>
    </recommendedName>
    <alternativeName>
        <fullName evidence="1">Non-canonical purine NTP pyrophosphatase</fullName>
    </alternativeName>
    <alternativeName>
        <fullName evidence="1">Non-standard purine NTP pyrophosphatase</fullName>
    </alternativeName>
    <alternativeName>
        <fullName evidence="1">Nucleoside-triphosphate diphosphatase</fullName>
    </alternativeName>
    <alternativeName>
        <fullName evidence="1">Nucleoside-triphosphate pyrophosphatase</fullName>
        <shortName evidence="1">NTPase</shortName>
    </alternativeName>
</protein>
<evidence type="ECO:0000255" key="1">
    <source>
        <dbReference type="HAMAP-Rule" id="MF_01405"/>
    </source>
</evidence>
<feature type="chain" id="PRO_1000073508" description="dITP/XTP pyrophosphatase">
    <location>
        <begin position="1"/>
        <end position="201"/>
    </location>
</feature>
<feature type="active site" description="Proton acceptor" evidence="1">
    <location>
        <position position="69"/>
    </location>
</feature>
<feature type="binding site" evidence="1">
    <location>
        <begin position="7"/>
        <end position="12"/>
    </location>
    <ligand>
        <name>substrate</name>
    </ligand>
</feature>
<feature type="binding site" evidence="1">
    <location>
        <position position="40"/>
    </location>
    <ligand>
        <name>Mg(2+)</name>
        <dbReference type="ChEBI" id="CHEBI:18420"/>
    </ligand>
</feature>
<feature type="binding site" evidence="1">
    <location>
        <position position="69"/>
    </location>
    <ligand>
        <name>Mg(2+)</name>
        <dbReference type="ChEBI" id="CHEBI:18420"/>
    </ligand>
</feature>
<feature type="binding site" evidence="1">
    <location>
        <position position="70"/>
    </location>
    <ligand>
        <name>substrate</name>
    </ligand>
</feature>
<feature type="binding site" evidence="1">
    <location>
        <begin position="152"/>
        <end position="155"/>
    </location>
    <ligand>
        <name>substrate</name>
    </ligand>
</feature>
<feature type="binding site" evidence="1">
    <location>
        <position position="175"/>
    </location>
    <ligand>
        <name>substrate</name>
    </ligand>
</feature>
<feature type="binding site" evidence="1">
    <location>
        <begin position="180"/>
        <end position="181"/>
    </location>
    <ligand>
        <name>substrate</name>
    </ligand>
</feature>
<gene>
    <name type="ordered locus">Dred_2683</name>
</gene>